<gene>
    <name type="primary">echdc3</name>
</gene>
<accession>A9JS71</accession>
<dbReference type="EMBL" id="BC155941">
    <property type="protein sequence ID" value="AAI55942.1"/>
    <property type="molecule type" value="mRNA"/>
</dbReference>
<dbReference type="RefSeq" id="NP_001106357.1">
    <property type="nucleotide sequence ID" value="NM_001112886.1"/>
</dbReference>
<dbReference type="SMR" id="A9JS71"/>
<dbReference type="GeneID" id="100127325"/>
<dbReference type="KEGG" id="xla:100127325"/>
<dbReference type="AGR" id="Xenbase:XB-GENE-1194020"/>
<dbReference type="CTD" id="100127325"/>
<dbReference type="Xenbase" id="XB-GENE-1194020">
    <property type="gene designation" value="echdc3.L"/>
</dbReference>
<dbReference type="OMA" id="SCDMVVC"/>
<dbReference type="OrthoDB" id="2139957at2759"/>
<dbReference type="Proteomes" id="UP000186698">
    <property type="component" value="Chromosome 3L"/>
</dbReference>
<dbReference type="Bgee" id="100127325">
    <property type="expression patterns" value="Expressed in egg cell and 19 other cell types or tissues"/>
</dbReference>
<dbReference type="GO" id="GO:0005739">
    <property type="term" value="C:mitochondrion"/>
    <property type="evidence" value="ECO:0000318"/>
    <property type="project" value="GO_Central"/>
</dbReference>
<dbReference type="GO" id="GO:0016836">
    <property type="term" value="F:hydro-lyase activity"/>
    <property type="evidence" value="ECO:0000318"/>
    <property type="project" value="GO_Central"/>
</dbReference>
<dbReference type="GO" id="GO:0006631">
    <property type="term" value="P:fatty acid metabolic process"/>
    <property type="evidence" value="ECO:0007669"/>
    <property type="project" value="UniProtKB-KW"/>
</dbReference>
<dbReference type="CDD" id="cd06558">
    <property type="entry name" value="crotonase-like"/>
    <property type="match status" value="1"/>
</dbReference>
<dbReference type="Gene3D" id="3.90.226.10">
    <property type="entry name" value="2-enoyl-CoA Hydratase, Chain A, domain 1"/>
    <property type="match status" value="1"/>
</dbReference>
<dbReference type="Gene3D" id="1.10.12.10">
    <property type="entry name" value="Lyase 2-enoyl-coa Hydratase, Chain A, domain 2"/>
    <property type="match status" value="1"/>
</dbReference>
<dbReference type="InterPro" id="IPR029045">
    <property type="entry name" value="ClpP/crotonase-like_dom_sf"/>
</dbReference>
<dbReference type="InterPro" id="IPR001753">
    <property type="entry name" value="Enoyl-CoA_hydra/iso"/>
</dbReference>
<dbReference type="InterPro" id="IPR014748">
    <property type="entry name" value="Enoyl-CoA_hydra_C"/>
</dbReference>
<dbReference type="InterPro" id="IPR052377">
    <property type="entry name" value="Mitochondrial_ECH-domain"/>
</dbReference>
<dbReference type="NCBIfam" id="NF006008">
    <property type="entry name" value="PRK08139.1"/>
    <property type="match status" value="1"/>
</dbReference>
<dbReference type="PANTHER" id="PTHR43602">
    <property type="match status" value="1"/>
</dbReference>
<dbReference type="PANTHER" id="PTHR43602:SF1">
    <property type="entry name" value="ENOYL-COA HYDRATASE DOMAIN-CONTAINING PROTEIN 3, MITOCHONDRIAL"/>
    <property type="match status" value="1"/>
</dbReference>
<dbReference type="Pfam" id="PF00378">
    <property type="entry name" value="ECH_1"/>
    <property type="match status" value="1"/>
</dbReference>
<dbReference type="SUPFAM" id="SSF52096">
    <property type="entry name" value="ClpP/crotonase"/>
    <property type="match status" value="1"/>
</dbReference>
<proteinExistence type="evidence at transcript level"/>
<comment type="function">
    <text evidence="1">May play a role in fatty acid biosynthesis and insulin sensitivity.</text>
</comment>
<comment type="subcellular location">
    <subcellularLocation>
        <location evidence="3">Mitochondrion</location>
    </subcellularLocation>
</comment>
<comment type="similarity">
    <text evidence="3">Belongs to the enoyl-CoA hydratase/isomerase family.</text>
</comment>
<organism>
    <name type="scientific">Xenopus laevis</name>
    <name type="common">African clawed frog</name>
    <dbReference type="NCBI Taxonomy" id="8355"/>
    <lineage>
        <taxon>Eukaryota</taxon>
        <taxon>Metazoa</taxon>
        <taxon>Chordata</taxon>
        <taxon>Craniata</taxon>
        <taxon>Vertebrata</taxon>
        <taxon>Euteleostomi</taxon>
        <taxon>Amphibia</taxon>
        <taxon>Batrachia</taxon>
        <taxon>Anura</taxon>
        <taxon>Pipoidea</taxon>
        <taxon>Pipidae</taxon>
        <taxon>Xenopodinae</taxon>
        <taxon>Xenopus</taxon>
        <taxon>Xenopus</taxon>
    </lineage>
</organism>
<reference key="1">
    <citation type="submission" date="2007-12" db="EMBL/GenBank/DDBJ databases">
        <authorList>
            <consortium name="NIH - Xenopus Gene Collection (XGC) project"/>
        </authorList>
    </citation>
    <scope>NUCLEOTIDE SEQUENCE [LARGE SCALE MRNA]</scope>
    <source>
        <tissue>Embryo</tissue>
    </source>
</reference>
<feature type="transit peptide" description="Mitochondrion" evidence="2">
    <location>
        <begin position="1"/>
        <end position="61"/>
    </location>
</feature>
<feature type="chain" id="PRO_0000333219" description="Enoyl-CoA hydratase domain-containing protein 3, mitochondrial">
    <location>
        <begin position="62"/>
        <end position="294"/>
    </location>
</feature>
<evidence type="ECO:0000250" key="1">
    <source>
        <dbReference type="UniProtKB" id="Q96DC8"/>
    </source>
</evidence>
<evidence type="ECO:0000255" key="2"/>
<evidence type="ECO:0000305" key="3"/>
<sequence length="294" mass="32189">MSWLRSCGERTAPALRGTYRILAGQSRFVNSSSHLQHTPLTVLQQEHGIRRIILNNPQQRNALSLPMIQSLQKDILHEADDPNLRVIIISAEGNVFSSGHNLKELTAEYGKDYHMEVFNTCAKLMTLFQTLPVPVIAEVNGLATAAGCQLVASCDIAVASDKSRFATPGVNVGLFCSTPGVALGRAVPRKVALEMLFTGEPISAHDALLHGLVSKVVPEENLKSETNRIALKICQTSHSVVALGKSTFYRQMAKSLTDAYKLTSEVMVENLAMKDGQEGLKSFIQKRKPVWTHS</sequence>
<protein>
    <recommendedName>
        <fullName>Enoyl-CoA hydratase domain-containing protein 3, mitochondrial</fullName>
    </recommendedName>
</protein>
<keyword id="KW-0276">Fatty acid metabolism</keyword>
<keyword id="KW-0443">Lipid metabolism</keyword>
<keyword id="KW-0496">Mitochondrion</keyword>
<keyword id="KW-1185">Reference proteome</keyword>
<keyword id="KW-0809">Transit peptide</keyword>
<name>ECHD3_XENLA</name>